<protein>
    <recommendedName>
        <fullName evidence="1">Urease accessory protein UreD</fullName>
    </recommendedName>
</protein>
<name>URED_PAEAT</name>
<organism>
    <name type="scientific">Paenarthrobacter aurescens (strain TC1)</name>
    <dbReference type="NCBI Taxonomy" id="290340"/>
    <lineage>
        <taxon>Bacteria</taxon>
        <taxon>Bacillati</taxon>
        <taxon>Actinomycetota</taxon>
        <taxon>Actinomycetes</taxon>
        <taxon>Micrococcales</taxon>
        <taxon>Micrococcaceae</taxon>
        <taxon>Paenarthrobacter</taxon>
    </lineage>
</organism>
<proteinExistence type="inferred from homology"/>
<accession>A1R1C9</accession>
<comment type="function">
    <text evidence="1">Required for maturation of urease via the functional incorporation of the urease nickel metallocenter.</text>
</comment>
<comment type="subunit">
    <text evidence="1">UreD, UreF and UreG form a complex that acts as a GTP-hydrolysis-dependent molecular chaperone, activating the urease apoprotein by helping to assemble the nickel containing metallocenter of UreC. The UreE protein probably delivers the nickel.</text>
</comment>
<comment type="subcellular location">
    <subcellularLocation>
        <location evidence="1">Cytoplasm</location>
    </subcellularLocation>
</comment>
<comment type="similarity">
    <text evidence="1">Belongs to the UreD family.</text>
</comment>
<gene>
    <name evidence="1" type="primary">ureD</name>
    <name type="ordered locus">AAur_0220</name>
</gene>
<feature type="chain" id="PRO_0000340409" description="Urease accessory protein UreD">
    <location>
        <begin position="1"/>
        <end position="290"/>
    </location>
</feature>
<dbReference type="EMBL" id="CP000474">
    <property type="protein sequence ID" value="ABM07529.1"/>
    <property type="molecule type" value="Genomic_DNA"/>
</dbReference>
<dbReference type="RefSeq" id="WP_011772989.1">
    <property type="nucleotide sequence ID" value="NC_008711.1"/>
</dbReference>
<dbReference type="SMR" id="A1R1C9"/>
<dbReference type="STRING" id="290340.AAur_0220"/>
<dbReference type="KEGG" id="aau:AAur_0220"/>
<dbReference type="eggNOG" id="COG0829">
    <property type="taxonomic scope" value="Bacteria"/>
</dbReference>
<dbReference type="HOGENOM" id="CLU_056339_5_0_11"/>
<dbReference type="Proteomes" id="UP000000637">
    <property type="component" value="Chromosome"/>
</dbReference>
<dbReference type="GO" id="GO:0005737">
    <property type="term" value="C:cytoplasm"/>
    <property type="evidence" value="ECO:0007669"/>
    <property type="project" value="UniProtKB-SubCell"/>
</dbReference>
<dbReference type="GO" id="GO:0016151">
    <property type="term" value="F:nickel cation binding"/>
    <property type="evidence" value="ECO:0007669"/>
    <property type="project" value="UniProtKB-UniRule"/>
</dbReference>
<dbReference type="HAMAP" id="MF_01384">
    <property type="entry name" value="UreD"/>
    <property type="match status" value="1"/>
</dbReference>
<dbReference type="InterPro" id="IPR002669">
    <property type="entry name" value="UreD"/>
</dbReference>
<dbReference type="PANTHER" id="PTHR33643">
    <property type="entry name" value="UREASE ACCESSORY PROTEIN D"/>
    <property type="match status" value="1"/>
</dbReference>
<dbReference type="PANTHER" id="PTHR33643:SF1">
    <property type="entry name" value="UREASE ACCESSORY PROTEIN D"/>
    <property type="match status" value="1"/>
</dbReference>
<dbReference type="Pfam" id="PF01774">
    <property type="entry name" value="UreD"/>
    <property type="match status" value="1"/>
</dbReference>
<evidence type="ECO:0000255" key="1">
    <source>
        <dbReference type="HAMAP-Rule" id="MF_01384"/>
    </source>
</evidence>
<reference key="1">
    <citation type="journal article" date="2006" name="PLoS Genet.">
        <title>Secrets of soil survival revealed by the genome sequence of Arthrobacter aurescens TC1.</title>
        <authorList>
            <person name="Mongodin E.F."/>
            <person name="Shapir N."/>
            <person name="Daugherty S.C."/>
            <person name="DeBoy R.T."/>
            <person name="Emerson J.B."/>
            <person name="Shvartzbeyn A."/>
            <person name="Radune D."/>
            <person name="Vamathevan J."/>
            <person name="Riggs F."/>
            <person name="Grinberg V."/>
            <person name="Khouri H.M."/>
            <person name="Wackett L.P."/>
            <person name="Nelson K.E."/>
            <person name="Sadowsky M.J."/>
        </authorList>
    </citation>
    <scope>NUCLEOTIDE SEQUENCE [LARGE SCALE GENOMIC DNA]</scope>
    <source>
        <strain>TC1</strain>
    </source>
</reference>
<sequence>MGPDSTLALGEGAVRGRLELGVCLRGGRSVASRQFHEGALRVLRPHYLDESGQVGYVMVNPGGAYLGADLFLIDVTVENNAALLLTTQSATKVYRTPGSFAEQRMSVRLGEGSRLELMPDQLIAYREASYRQNSRISLHPTSSLIMAEVITPGWSPDGASFKYQEVRLRNEIWIDDENGAKLLALDNLLIRPPLGDVTGMGFMEGFSHLGSLVVVDPRVNQGLADELDLIARDFDAYTGMSLTATIAGSTGLVLRSLSNSTEELNNLLGACAGVLRERWYGQAPLNLRKY</sequence>
<keyword id="KW-0143">Chaperone</keyword>
<keyword id="KW-0963">Cytoplasm</keyword>
<keyword id="KW-0996">Nickel insertion</keyword>